<sequence length="1286" mass="142608">MSTSFKEIRVSMATTEDIRRWSYGVVKKPETINYRTLKPEKDGLFGEQIFGPTRDWECGCGKYKRSRYRGVVCERCGVEVTQSSVRRERMGHIELAAPVTHIWYFKGVPSRLGYLLDIAPKDLDKVIYFAAYMVVSLDEEGRKEDLQDLENELRLDIKQLRDACDASIASAVSELERTITELQDAKTSASRINKVRSEAENKMANIRREYDDKIEHLERVWDSFKALKVGGLYAEDDVFRDVQDRYGDYFDACMGAEAIKRRLEDFDLQKTAQELGVQIVECRGQRKVRAIKRLRVVNSFITSKANPACMVLDVIPVIPPELRPMVQLDAGRFAASDLNDLYRRVINRNNRLKRLLDLGAPRIIVNNEKRMLQEAVDALFDNGRRGRPVSGTNNRTLKSLSDMLKGKSGRFRQNLLGKRVDYSGRSVIVVGPTLQLHQCGLPKLMALELFKPFIVKRLLDLALAPNIRSARRMIERGDPAVWDMLDAVIKARPVLLNRAPTLHRLGIQAFEPQLVEGKAIQLHPLVCAAFNADFDGDQMAVHLPLSLEAQAEARVLMLASNNILNPSDGRPVTLPSHDMIIGLYHLTTVKPSAKGAGRAFSSVAEAIMAKDRGDLSISAPVKILFSNIVLDGKTLDSAVVETTLGRAIFNEALPDGHPYINELVDKQVISSIINNLAEVYSKVEVANTLDKIKSVGFHWATRSGVTVAISDVVSPPEKQEIISKYETQARGVQQDFEIGLLTDLERRQALVSIWSEATDRVAEAMRKCFPDDNTINTMVTSGARGNWLQVRNIAGMRGLVANPKGETIPRPIISSYREGLSVTEYFISTHGARKGLVDTALKTADSGYLTRRLVDVAQDVVVRERDCGFTRGVRMPVTFRGDDGELHKVENAEHSVYGRTLAEDVKTPDDNLIAKAGEDISGIMIDSFIAAGVESVEVRSVLTCRSKVGVCSACYGRSLATGARVDIGDAVGIVAAQSIGEPGTQLTMRTFHSGGSASAVDITQGLPRVQELFEARTPRAAAPIAEADGTVSIEDGDRARRLILKSDNNEEFSYTVLKRAQLRVKDGSRVSLGDQLVEGSLDPKEVLRVKGIRAVQEYLVNGVQQVYRSQGVPIHNKHIEVIVRQMLRKVTVVDHGDTSMLPGELIDQSRYQELNREAQAEGRKTASARQEVTGITKASLATESWLSAASFQETTRVLTQAVISGRRDPLIGLKENVIIGNLIPAGTGLSVYRDVEPEPRPEAISRMYPTRRPEIENLLEGDSVDPEFDFSSLTQGLELPDDYPVQ</sequence>
<proteinExistence type="inferred from homology"/>
<dbReference type="EC" id="2.7.7.6" evidence="1"/>
<dbReference type="EMBL" id="BX251410">
    <property type="protein sequence ID" value="CAD66767.1"/>
    <property type="status" value="ALT_INIT"/>
    <property type="molecule type" value="Genomic_DNA"/>
</dbReference>
<dbReference type="RefSeq" id="WP_033799854.1">
    <property type="nucleotide sequence ID" value="NC_004551.1"/>
</dbReference>
<dbReference type="SMR" id="Q820D9"/>
<dbReference type="GeneID" id="67387856"/>
<dbReference type="KEGG" id="tws:TW082"/>
<dbReference type="HOGENOM" id="CLU_000524_3_1_11"/>
<dbReference type="GO" id="GO:0000428">
    <property type="term" value="C:DNA-directed RNA polymerase complex"/>
    <property type="evidence" value="ECO:0007669"/>
    <property type="project" value="UniProtKB-KW"/>
</dbReference>
<dbReference type="GO" id="GO:0003677">
    <property type="term" value="F:DNA binding"/>
    <property type="evidence" value="ECO:0007669"/>
    <property type="project" value="UniProtKB-UniRule"/>
</dbReference>
<dbReference type="GO" id="GO:0003899">
    <property type="term" value="F:DNA-directed RNA polymerase activity"/>
    <property type="evidence" value="ECO:0007669"/>
    <property type="project" value="UniProtKB-UniRule"/>
</dbReference>
<dbReference type="GO" id="GO:0000287">
    <property type="term" value="F:magnesium ion binding"/>
    <property type="evidence" value="ECO:0007669"/>
    <property type="project" value="UniProtKB-UniRule"/>
</dbReference>
<dbReference type="GO" id="GO:0008270">
    <property type="term" value="F:zinc ion binding"/>
    <property type="evidence" value="ECO:0007669"/>
    <property type="project" value="UniProtKB-UniRule"/>
</dbReference>
<dbReference type="GO" id="GO:0006351">
    <property type="term" value="P:DNA-templated transcription"/>
    <property type="evidence" value="ECO:0007669"/>
    <property type="project" value="UniProtKB-UniRule"/>
</dbReference>
<dbReference type="CDD" id="cd02655">
    <property type="entry name" value="RNAP_beta'_C"/>
    <property type="match status" value="1"/>
</dbReference>
<dbReference type="CDD" id="cd01609">
    <property type="entry name" value="RNAP_beta'_N"/>
    <property type="match status" value="1"/>
</dbReference>
<dbReference type="Gene3D" id="1.10.132.30">
    <property type="match status" value="1"/>
</dbReference>
<dbReference type="Gene3D" id="1.10.150.390">
    <property type="match status" value="1"/>
</dbReference>
<dbReference type="Gene3D" id="1.10.1790.20">
    <property type="match status" value="1"/>
</dbReference>
<dbReference type="Gene3D" id="1.10.40.90">
    <property type="match status" value="1"/>
</dbReference>
<dbReference type="Gene3D" id="2.40.40.20">
    <property type="match status" value="1"/>
</dbReference>
<dbReference type="Gene3D" id="2.40.50.100">
    <property type="match status" value="1"/>
</dbReference>
<dbReference type="Gene3D" id="4.10.860.120">
    <property type="entry name" value="RNA polymerase II, clamp domain"/>
    <property type="match status" value="1"/>
</dbReference>
<dbReference type="Gene3D" id="1.10.274.100">
    <property type="entry name" value="RNA polymerase Rpb1, domain 3"/>
    <property type="match status" value="2"/>
</dbReference>
<dbReference type="HAMAP" id="MF_01322">
    <property type="entry name" value="RNApol_bact_RpoC"/>
    <property type="match status" value="1"/>
</dbReference>
<dbReference type="InterPro" id="IPR045867">
    <property type="entry name" value="DNA-dir_RpoC_beta_prime"/>
</dbReference>
<dbReference type="InterPro" id="IPR012754">
    <property type="entry name" value="DNA-dir_RpoC_beta_prime_bact"/>
</dbReference>
<dbReference type="InterPro" id="IPR000722">
    <property type="entry name" value="RNA_pol_asu"/>
</dbReference>
<dbReference type="InterPro" id="IPR006592">
    <property type="entry name" value="RNA_pol_N"/>
</dbReference>
<dbReference type="InterPro" id="IPR007080">
    <property type="entry name" value="RNA_pol_Rpb1_1"/>
</dbReference>
<dbReference type="InterPro" id="IPR007066">
    <property type="entry name" value="RNA_pol_Rpb1_3"/>
</dbReference>
<dbReference type="InterPro" id="IPR042102">
    <property type="entry name" value="RNA_pol_Rpb1_3_sf"/>
</dbReference>
<dbReference type="InterPro" id="IPR007083">
    <property type="entry name" value="RNA_pol_Rpb1_4"/>
</dbReference>
<dbReference type="InterPro" id="IPR007081">
    <property type="entry name" value="RNA_pol_Rpb1_5"/>
</dbReference>
<dbReference type="InterPro" id="IPR044893">
    <property type="entry name" value="RNA_pol_Rpb1_clamp_domain"/>
</dbReference>
<dbReference type="InterPro" id="IPR038120">
    <property type="entry name" value="Rpb1_funnel_sf"/>
</dbReference>
<dbReference type="NCBIfam" id="NF011498">
    <property type="entry name" value="PRK14906.1"/>
    <property type="match status" value="1"/>
</dbReference>
<dbReference type="NCBIfam" id="TIGR02386">
    <property type="entry name" value="rpoC_TIGR"/>
    <property type="match status" value="1"/>
</dbReference>
<dbReference type="PANTHER" id="PTHR19376">
    <property type="entry name" value="DNA-DIRECTED RNA POLYMERASE"/>
    <property type="match status" value="1"/>
</dbReference>
<dbReference type="PANTHER" id="PTHR19376:SF54">
    <property type="entry name" value="DNA-DIRECTED RNA POLYMERASE SUBUNIT BETA"/>
    <property type="match status" value="1"/>
</dbReference>
<dbReference type="Pfam" id="PF04997">
    <property type="entry name" value="RNA_pol_Rpb1_1"/>
    <property type="match status" value="1"/>
</dbReference>
<dbReference type="Pfam" id="PF00623">
    <property type="entry name" value="RNA_pol_Rpb1_2"/>
    <property type="match status" value="1"/>
</dbReference>
<dbReference type="Pfam" id="PF04983">
    <property type="entry name" value="RNA_pol_Rpb1_3"/>
    <property type="match status" value="1"/>
</dbReference>
<dbReference type="Pfam" id="PF05000">
    <property type="entry name" value="RNA_pol_Rpb1_4"/>
    <property type="match status" value="1"/>
</dbReference>
<dbReference type="Pfam" id="PF04998">
    <property type="entry name" value="RNA_pol_Rpb1_5"/>
    <property type="match status" value="1"/>
</dbReference>
<dbReference type="SMART" id="SM00663">
    <property type="entry name" value="RPOLA_N"/>
    <property type="match status" value="1"/>
</dbReference>
<dbReference type="SUPFAM" id="SSF64484">
    <property type="entry name" value="beta and beta-prime subunits of DNA dependent RNA-polymerase"/>
    <property type="match status" value="1"/>
</dbReference>
<reference key="1">
    <citation type="journal article" date="2003" name="Lancet">
        <title>Sequencing and analysis of the genome of the Whipple's disease bacterium Tropheryma whipplei.</title>
        <authorList>
            <person name="Bentley S.D."/>
            <person name="Maiwald M."/>
            <person name="Murphy L.D."/>
            <person name="Pallen M.J."/>
            <person name="Yeats C.A."/>
            <person name="Dover L.G."/>
            <person name="Norbertczak H.T."/>
            <person name="Besra G.S."/>
            <person name="Quail M.A."/>
            <person name="Harris D.E."/>
            <person name="von Herbay A."/>
            <person name="Goble A."/>
            <person name="Rutter S."/>
            <person name="Squares R."/>
            <person name="Squares S."/>
            <person name="Barrell B.G."/>
            <person name="Parkhill J."/>
            <person name="Relman D.A."/>
        </authorList>
    </citation>
    <scope>NUCLEOTIDE SEQUENCE [LARGE SCALE GENOMIC DNA]</scope>
    <source>
        <strain>TW08/27</strain>
    </source>
</reference>
<name>RPOC_TROW8</name>
<accession>Q820D9</accession>
<feature type="chain" id="PRO_0000067825" description="DNA-directed RNA polymerase subunit beta'">
    <location>
        <begin position="1"/>
        <end position="1286"/>
    </location>
</feature>
<feature type="binding site" evidence="1">
    <location>
        <position position="58"/>
    </location>
    <ligand>
        <name>Zn(2+)</name>
        <dbReference type="ChEBI" id="CHEBI:29105"/>
        <label>1</label>
    </ligand>
</feature>
<feature type="binding site" evidence="1">
    <location>
        <position position="60"/>
    </location>
    <ligand>
        <name>Zn(2+)</name>
        <dbReference type="ChEBI" id="CHEBI:29105"/>
        <label>1</label>
    </ligand>
</feature>
<feature type="binding site" evidence="1">
    <location>
        <position position="73"/>
    </location>
    <ligand>
        <name>Zn(2+)</name>
        <dbReference type="ChEBI" id="CHEBI:29105"/>
        <label>1</label>
    </ligand>
</feature>
<feature type="binding site" evidence="1">
    <location>
        <position position="76"/>
    </location>
    <ligand>
        <name>Zn(2+)</name>
        <dbReference type="ChEBI" id="CHEBI:29105"/>
        <label>1</label>
    </ligand>
</feature>
<feature type="binding site" evidence="1">
    <location>
        <position position="533"/>
    </location>
    <ligand>
        <name>Mg(2+)</name>
        <dbReference type="ChEBI" id="CHEBI:18420"/>
    </ligand>
</feature>
<feature type="binding site" evidence="1">
    <location>
        <position position="535"/>
    </location>
    <ligand>
        <name>Mg(2+)</name>
        <dbReference type="ChEBI" id="CHEBI:18420"/>
    </ligand>
</feature>
<feature type="binding site" evidence="1">
    <location>
        <position position="537"/>
    </location>
    <ligand>
        <name>Mg(2+)</name>
        <dbReference type="ChEBI" id="CHEBI:18420"/>
    </ligand>
</feature>
<feature type="binding site" evidence="1">
    <location>
        <position position="867"/>
    </location>
    <ligand>
        <name>Zn(2+)</name>
        <dbReference type="ChEBI" id="CHEBI:29105"/>
        <label>2</label>
    </ligand>
</feature>
<feature type="binding site" evidence="1">
    <location>
        <position position="944"/>
    </location>
    <ligand>
        <name>Zn(2+)</name>
        <dbReference type="ChEBI" id="CHEBI:29105"/>
        <label>2</label>
    </ligand>
</feature>
<feature type="binding site" evidence="1">
    <location>
        <position position="951"/>
    </location>
    <ligand>
        <name>Zn(2+)</name>
        <dbReference type="ChEBI" id="CHEBI:29105"/>
        <label>2</label>
    </ligand>
</feature>
<feature type="binding site" evidence="1">
    <location>
        <position position="954"/>
    </location>
    <ligand>
        <name>Zn(2+)</name>
        <dbReference type="ChEBI" id="CHEBI:29105"/>
        <label>2</label>
    </ligand>
</feature>
<organism>
    <name type="scientific">Tropheryma whipplei (strain TW08/27)</name>
    <name type="common">Whipple's bacillus</name>
    <dbReference type="NCBI Taxonomy" id="218496"/>
    <lineage>
        <taxon>Bacteria</taxon>
        <taxon>Bacillati</taxon>
        <taxon>Actinomycetota</taxon>
        <taxon>Actinomycetes</taxon>
        <taxon>Micrococcales</taxon>
        <taxon>Tropherymataceae</taxon>
        <taxon>Tropheryma</taxon>
    </lineage>
</organism>
<protein>
    <recommendedName>
        <fullName evidence="1">DNA-directed RNA polymerase subunit beta'</fullName>
        <shortName evidence="1">RNAP subunit beta'</shortName>
        <ecNumber evidence="1">2.7.7.6</ecNumber>
    </recommendedName>
    <alternativeName>
        <fullName evidence="1">RNA polymerase subunit beta'</fullName>
    </alternativeName>
    <alternativeName>
        <fullName evidence="1">Transcriptase subunit beta'</fullName>
    </alternativeName>
</protein>
<evidence type="ECO:0000255" key="1">
    <source>
        <dbReference type="HAMAP-Rule" id="MF_01322"/>
    </source>
</evidence>
<evidence type="ECO:0000305" key="2"/>
<comment type="function">
    <text evidence="1">DNA-dependent RNA polymerase catalyzes the transcription of DNA into RNA using the four ribonucleoside triphosphates as substrates.</text>
</comment>
<comment type="catalytic activity">
    <reaction evidence="1">
        <text>RNA(n) + a ribonucleoside 5'-triphosphate = RNA(n+1) + diphosphate</text>
        <dbReference type="Rhea" id="RHEA:21248"/>
        <dbReference type="Rhea" id="RHEA-COMP:14527"/>
        <dbReference type="Rhea" id="RHEA-COMP:17342"/>
        <dbReference type="ChEBI" id="CHEBI:33019"/>
        <dbReference type="ChEBI" id="CHEBI:61557"/>
        <dbReference type="ChEBI" id="CHEBI:140395"/>
        <dbReference type="EC" id="2.7.7.6"/>
    </reaction>
</comment>
<comment type="cofactor">
    <cofactor evidence="1">
        <name>Mg(2+)</name>
        <dbReference type="ChEBI" id="CHEBI:18420"/>
    </cofactor>
    <text evidence="1">Binds 1 Mg(2+) ion per subunit.</text>
</comment>
<comment type="cofactor">
    <cofactor evidence="1">
        <name>Zn(2+)</name>
        <dbReference type="ChEBI" id="CHEBI:29105"/>
    </cofactor>
    <text evidence="1">Binds 2 Zn(2+) ions per subunit.</text>
</comment>
<comment type="subunit">
    <text evidence="1">The RNAP catalytic core consists of 2 alpha, 1 beta, 1 beta' and 1 omega subunit. When a sigma factor is associated with the core the holoenzyme is formed, which can initiate transcription.</text>
</comment>
<comment type="similarity">
    <text evidence="1">Belongs to the RNA polymerase beta' chain family.</text>
</comment>
<comment type="sequence caution" evidence="2">
    <conflict type="erroneous initiation">
        <sequence resource="EMBL-CDS" id="CAD66767"/>
    </conflict>
    <text>Truncated N-terminus.</text>
</comment>
<gene>
    <name evidence="1" type="primary">rpoC</name>
    <name type="ordered locus">TW082</name>
</gene>
<keyword id="KW-0240">DNA-directed RNA polymerase</keyword>
<keyword id="KW-0460">Magnesium</keyword>
<keyword id="KW-0479">Metal-binding</keyword>
<keyword id="KW-0548">Nucleotidyltransferase</keyword>
<keyword id="KW-0804">Transcription</keyword>
<keyword id="KW-0808">Transferase</keyword>
<keyword id="KW-0862">Zinc</keyword>